<evidence type="ECO:0000250" key="1"/>
<evidence type="ECO:0000250" key="2">
    <source>
        <dbReference type="UniProtKB" id="P00950"/>
    </source>
</evidence>
<evidence type="ECO:0000250" key="3">
    <source>
        <dbReference type="UniProtKB" id="P18669"/>
    </source>
</evidence>
<evidence type="ECO:0000305" key="4"/>
<evidence type="ECO:0000312" key="5">
    <source>
        <dbReference type="MGI" id="MGI:97552"/>
    </source>
</evidence>
<evidence type="ECO:0007744" key="6">
    <source>
    </source>
</evidence>
<evidence type="ECO:0007744" key="7">
    <source>
    </source>
</evidence>
<evidence type="ECO:0007744" key="8">
    <source>
    </source>
</evidence>
<evidence type="ECO:0007744" key="9">
    <source>
    </source>
</evidence>
<protein>
    <recommendedName>
        <fullName evidence="4">Phosphoglycerate mutase 1</fullName>
        <ecNumber evidence="3">5.4.2.11</ecNumber>
        <ecNumber evidence="3">5.4.2.4</ecNumber>
    </recommendedName>
    <alternativeName>
        <fullName>BPG-dependent PGAM 1</fullName>
    </alternativeName>
    <alternativeName>
        <fullName>Phosphoglycerate mutase isozyme B</fullName>
        <shortName>PGAM-B</shortName>
    </alternativeName>
</protein>
<proteinExistence type="evidence at protein level"/>
<name>PGAM1_MOUSE</name>
<accession>Q9DBJ1</accession>
<accession>Q9D6W0</accession>
<accession>Q9ERT3</accession>
<organism>
    <name type="scientific">Mus musculus</name>
    <name type="common">Mouse</name>
    <dbReference type="NCBI Taxonomy" id="10090"/>
    <lineage>
        <taxon>Eukaryota</taxon>
        <taxon>Metazoa</taxon>
        <taxon>Chordata</taxon>
        <taxon>Craniata</taxon>
        <taxon>Vertebrata</taxon>
        <taxon>Euteleostomi</taxon>
        <taxon>Mammalia</taxon>
        <taxon>Eutheria</taxon>
        <taxon>Euarchontoglires</taxon>
        <taxon>Glires</taxon>
        <taxon>Rodentia</taxon>
        <taxon>Myomorpha</taxon>
        <taxon>Muroidea</taxon>
        <taxon>Muridae</taxon>
        <taxon>Murinae</taxon>
        <taxon>Mus</taxon>
        <taxon>Mus</taxon>
    </lineage>
</organism>
<dbReference type="EC" id="5.4.2.11" evidence="3"/>
<dbReference type="EC" id="5.4.2.4" evidence="3"/>
<dbReference type="EMBL" id="AF283667">
    <property type="protein sequence ID" value="AAG13955.1"/>
    <property type="molecule type" value="mRNA"/>
</dbReference>
<dbReference type="EMBL" id="AK004921">
    <property type="protein sequence ID" value="BAB23672.1"/>
    <property type="molecule type" value="mRNA"/>
</dbReference>
<dbReference type="EMBL" id="AK009905">
    <property type="protein sequence ID" value="BAB26576.1"/>
    <property type="molecule type" value="mRNA"/>
</dbReference>
<dbReference type="EMBL" id="BC002241">
    <property type="protein sequence ID" value="AAH02241.1"/>
    <property type="molecule type" value="mRNA"/>
</dbReference>
<dbReference type="EMBL" id="BC005661">
    <property type="protein sequence ID" value="AAH05661.1"/>
    <property type="molecule type" value="mRNA"/>
</dbReference>
<dbReference type="EMBL" id="BC066844">
    <property type="protein sequence ID" value="AAH66844.1"/>
    <property type="molecule type" value="mRNA"/>
</dbReference>
<dbReference type="EMBL" id="BC083090">
    <property type="protein sequence ID" value="AAH83090.1"/>
    <property type="molecule type" value="mRNA"/>
</dbReference>
<dbReference type="CCDS" id="CCDS29815.1"/>
<dbReference type="RefSeq" id="NP_075907.2">
    <property type="nucleotide sequence ID" value="NM_023418.2"/>
</dbReference>
<dbReference type="SMR" id="Q9DBJ1"/>
<dbReference type="BioGRID" id="202130">
    <property type="interactions" value="26"/>
</dbReference>
<dbReference type="FunCoup" id="Q9DBJ1">
    <property type="interactions" value="1695"/>
</dbReference>
<dbReference type="IntAct" id="Q9DBJ1">
    <property type="interactions" value="3"/>
</dbReference>
<dbReference type="MINT" id="Q9DBJ1"/>
<dbReference type="STRING" id="10090.ENSMUSP00000011896"/>
<dbReference type="ChEMBL" id="CHEMBL4523447"/>
<dbReference type="GlyGen" id="Q9DBJ1">
    <property type="glycosylation" value="3 sites, 1 N-linked glycan (1 site), 1 O-linked glycan (2 sites)"/>
</dbReference>
<dbReference type="iPTMnet" id="Q9DBJ1"/>
<dbReference type="MetOSite" id="Q9DBJ1"/>
<dbReference type="PhosphoSitePlus" id="Q9DBJ1"/>
<dbReference type="SwissPalm" id="Q9DBJ1"/>
<dbReference type="REPRODUCTION-2DPAGE" id="IPI00457898"/>
<dbReference type="REPRODUCTION-2DPAGE" id="Q9DBJ1"/>
<dbReference type="jPOST" id="Q9DBJ1"/>
<dbReference type="PaxDb" id="10090-ENSMUSP00000011896"/>
<dbReference type="ProteomicsDB" id="287689"/>
<dbReference type="Pumba" id="Q9DBJ1"/>
<dbReference type="DNASU" id="18648"/>
<dbReference type="Ensembl" id="ENSMUST00000011896.8">
    <property type="protein sequence ID" value="ENSMUSP00000011896.7"/>
    <property type="gene ID" value="ENSMUSG00000011752.8"/>
</dbReference>
<dbReference type="GeneID" id="18648"/>
<dbReference type="KEGG" id="mmu:18648"/>
<dbReference type="UCSC" id="uc008hml.1">
    <property type="organism name" value="mouse"/>
</dbReference>
<dbReference type="AGR" id="MGI:97552"/>
<dbReference type="CTD" id="5223"/>
<dbReference type="MGI" id="MGI:97552">
    <property type="gene designation" value="Pgam1"/>
</dbReference>
<dbReference type="VEuPathDB" id="HostDB:ENSMUSG00000011752"/>
<dbReference type="eggNOG" id="KOG0235">
    <property type="taxonomic scope" value="Eukaryota"/>
</dbReference>
<dbReference type="GeneTree" id="ENSGT00950000182926"/>
<dbReference type="HOGENOM" id="CLU_033323_1_1_1"/>
<dbReference type="InParanoid" id="Q9DBJ1"/>
<dbReference type="OMA" id="MLPYWYD"/>
<dbReference type="OrthoDB" id="354304at2759"/>
<dbReference type="PhylomeDB" id="Q9DBJ1"/>
<dbReference type="TreeFam" id="TF300007"/>
<dbReference type="BRENDA" id="5.4.2.11">
    <property type="organism ID" value="3474"/>
</dbReference>
<dbReference type="Reactome" id="R-MMU-6798695">
    <property type="pathway name" value="Neutrophil degranulation"/>
</dbReference>
<dbReference type="Reactome" id="R-MMU-70171">
    <property type="pathway name" value="Glycolysis"/>
</dbReference>
<dbReference type="Reactome" id="R-MMU-70263">
    <property type="pathway name" value="Gluconeogenesis"/>
</dbReference>
<dbReference type="SABIO-RK" id="Q9DBJ1"/>
<dbReference type="BioGRID-ORCS" id="18648">
    <property type="hits" value="24 hits in 75 CRISPR screens"/>
</dbReference>
<dbReference type="CD-CODE" id="CE726F99">
    <property type="entry name" value="Postsynaptic density"/>
</dbReference>
<dbReference type="ChiTaRS" id="Pgam1">
    <property type="organism name" value="mouse"/>
</dbReference>
<dbReference type="PRO" id="PR:Q9DBJ1"/>
<dbReference type="Proteomes" id="UP000000589">
    <property type="component" value="Chromosome 19"/>
</dbReference>
<dbReference type="RNAct" id="Q9DBJ1">
    <property type="molecule type" value="protein"/>
</dbReference>
<dbReference type="Bgee" id="ENSMUSG00000011752">
    <property type="expression patterns" value="Expressed in embryonic post-anal tail and 130 other cell types or tissues"/>
</dbReference>
<dbReference type="ExpressionAtlas" id="Q9DBJ1">
    <property type="expression patterns" value="baseline and differential"/>
</dbReference>
<dbReference type="GO" id="GO:0005829">
    <property type="term" value="C:cytosol"/>
    <property type="evidence" value="ECO:0000314"/>
    <property type="project" value="MGI"/>
</dbReference>
<dbReference type="GO" id="GO:0043209">
    <property type="term" value="C:myelin sheath"/>
    <property type="evidence" value="ECO:0007005"/>
    <property type="project" value="UniProtKB"/>
</dbReference>
<dbReference type="GO" id="GO:0004082">
    <property type="term" value="F:bisphosphoglycerate mutase activity"/>
    <property type="evidence" value="ECO:0000250"/>
    <property type="project" value="UniProtKB"/>
</dbReference>
<dbReference type="GO" id="GO:0016787">
    <property type="term" value="F:hydrolase activity"/>
    <property type="evidence" value="ECO:0007669"/>
    <property type="project" value="UniProtKB-KW"/>
</dbReference>
<dbReference type="GO" id="GO:0004619">
    <property type="term" value="F:phosphoglycerate mutase activity"/>
    <property type="evidence" value="ECO:0000314"/>
    <property type="project" value="MGI"/>
</dbReference>
<dbReference type="GO" id="GO:0019901">
    <property type="term" value="F:protein kinase binding"/>
    <property type="evidence" value="ECO:0007669"/>
    <property type="project" value="Ensembl"/>
</dbReference>
<dbReference type="GO" id="GO:0061621">
    <property type="term" value="P:canonical glycolysis"/>
    <property type="evidence" value="ECO:0007669"/>
    <property type="project" value="Ensembl"/>
</dbReference>
<dbReference type="GO" id="GO:0006094">
    <property type="term" value="P:gluconeogenesis"/>
    <property type="evidence" value="ECO:0000314"/>
    <property type="project" value="MGI"/>
</dbReference>
<dbReference type="GO" id="GO:0046166">
    <property type="term" value="P:glyceraldehyde-3-phosphate biosynthetic process"/>
    <property type="evidence" value="ECO:0000266"/>
    <property type="project" value="MGI"/>
</dbReference>
<dbReference type="CDD" id="cd07067">
    <property type="entry name" value="HP_PGM_like"/>
    <property type="match status" value="1"/>
</dbReference>
<dbReference type="FunFam" id="3.40.50.1240:FF:000007">
    <property type="entry name" value="Phosphoglycerate mutase"/>
    <property type="match status" value="1"/>
</dbReference>
<dbReference type="Gene3D" id="3.40.50.1240">
    <property type="entry name" value="Phosphoglycerate mutase-like"/>
    <property type="match status" value="1"/>
</dbReference>
<dbReference type="HAMAP" id="MF_01039">
    <property type="entry name" value="PGAM_GpmA"/>
    <property type="match status" value="1"/>
</dbReference>
<dbReference type="InterPro" id="IPR013078">
    <property type="entry name" value="His_Pase_superF_clade-1"/>
</dbReference>
<dbReference type="InterPro" id="IPR029033">
    <property type="entry name" value="His_PPase_superfam"/>
</dbReference>
<dbReference type="InterPro" id="IPR001345">
    <property type="entry name" value="PG/BPGM_mutase_AS"/>
</dbReference>
<dbReference type="InterPro" id="IPR005952">
    <property type="entry name" value="Phosphogly_mut1"/>
</dbReference>
<dbReference type="NCBIfam" id="TIGR01258">
    <property type="entry name" value="pgm_1"/>
    <property type="match status" value="1"/>
</dbReference>
<dbReference type="NCBIfam" id="NF010713">
    <property type="entry name" value="PRK14115.1"/>
    <property type="match status" value="1"/>
</dbReference>
<dbReference type="PANTHER" id="PTHR11931">
    <property type="entry name" value="PHOSPHOGLYCERATE MUTASE"/>
    <property type="match status" value="1"/>
</dbReference>
<dbReference type="Pfam" id="PF00300">
    <property type="entry name" value="His_Phos_1"/>
    <property type="match status" value="2"/>
</dbReference>
<dbReference type="PIRSF" id="PIRSF000709">
    <property type="entry name" value="6PFK_2-Ptase"/>
    <property type="match status" value="1"/>
</dbReference>
<dbReference type="SMART" id="SM00855">
    <property type="entry name" value="PGAM"/>
    <property type="match status" value="1"/>
</dbReference>
<dbReference type="SUPFAM" id="SSF53254">
    <property type="entry name" value="Phosphoglycerate mutase-like"/>
    <property type="match status" value="1"/>
</dbReference>
<dbReference type="PROSITE" id="PS00175">
    <property type="entry name" value="PG_MUTASE"/>
    <property type="match status" value="1"/>
</dbReference>
<reference key="1">
    <citation type="submission" date="2000-06" db="EMBL/GenBank/DDBJ databases">
        <authorList>
            <person name="Yu L."/>
        </authorList>
    </citation>
    <scope>NUCLEOTIDE SEQUENCE [MRNA]</scope>
    <source>
        <tissue>Brain</tissue>
    </source>
</reference>
<reference key="2">
    <citation type="journal article" date="2005" name="Science">
        <title>The transcriptional landscape of the mammalian genome.</title>
        <authorList>
            <person name="Carninci P."/>
            <person name="Kasukawa T."/>
            <person name="Katayama S."/>
            <person name="Gough J."/>
            <person name="Frith M.C."/>
            <person name="Maeda N."/>
            <person name="Oyama R."/>
            <person name="Ravasi T."/>
            <person name="Lenhard B."/>
            <person name="Wells C."/>
            <person name="Kodzius R."/>
            <person name="Shimokawa K."/>
            <person name="Bajic V.B."/>
            <person name="Brenner S.E."/>
            <person name="Batalov S."/>
            <person name="Forrest A.R."/>
            <person name="Zavolan M."/>
            <person name="Davis M.J."/>
            <person name="Wilming L.G."/>
            <person name="Aidinis V."/>
            <person name="Allen J.E."/>
            <person name="Ambesi-Impiombato A."/>
            <person name="Apweiler R."/>
            <person name="Aturaliya R.N."/>
            <person name="Bailey T.L."/>
            <person name="Bansal M."/>
            <person name="Baxter L."/>
            <person name="Beisel K.W."/>
            <person name="Bersano T."/>
            <person name="Bono H."/>
            <person name="Chalk A.M."/>
            <person name="Chiu K.P."/>
            <person name="Choudhary V."/>
            <person name="Christoffels A."/>
            <person name="Clutterbuck D.R."/>
            <person name="Crowe M.L."/>
            <person name="Dalla E."/>
            <person name="Dalrymple B.P."/>
            <person name="de Bono B."/>
            <person name="Della Gatta G."/>
            <person name="di Bernardo D."/>
            <person name="Down T."/>
            <person name="Engstrom P."/>
            <person name="Fagiolini M."/>
            <person name="Faulkner G."/>
            <person name="Fletcher C.F."/>
            <person name="Fukushima T."/>
            <person name="Furuno M."/>
            <person name="Futaki S."/>
            <person name="Gariboldi M."/>
            <person name="Georgii-Hemming P."/>
            <person name="Gingeras T.R."/>
            <person name="Gojobori T."/>
            <person name="Green R.E."/>
            <person name="Gustincich S."/>
            <person name="Harbers M."/>
            <person name="Hayashi Y."/>
            <person name="Hensch T.K."/>
            <person name="Hirokawa N."/>
            <person name="Hill D."/>
            <person name="Huminiecki L."/>
            <person name="Iacono M."/>
            <person name="Ikeo K."/>
            <person name="Iwama A."/>
            <person name="Ishikawa T."/>
            <person name="Jakt M."/>
            <person name="Kanapin A."/>
            <person name="Katoh M."/>
            <person name="Kawasawa Y."/>
            <person name="Kelso J."/>
            <person name="Kitamura H."/>
            <person name="Kitano H."/>
            <person name="Kollias G."/>
            <person name="Krishnan S.P."/>
            <person name="Kruger A."/>
            <person name="Kummerfeld S.K."/>
            <person name="Kurochkin I.V."/>
            <person name="Lareau L.F."/>
            <person name="Lazarevic D."/>
            <person name="Lipovich L."/>
            <person name="Liu J."/>
            <person name="Liuni S."/>
            <person name="McWilliam S."/>
            <person name="Madan Babu M."/>
            <person name="Madera M."/>
            <person name="Marchionni L."/>
            <person name="Matsuda H."/>
            <person name="Matsuzawa S."/>
            <person name="Miki H."/>
            <person name="Mignone F."/>
            <person name="Miyake S."/>
            <person name="Morris K."/>
            <person name="Mottagui-Tabar S."/>
            <person name="Mulder N."/>
            <person name="Nakano N."/>
            <person name="Nakauchi H."/>
            <person name="Ng P."/>
            <person name="Nilsson R."/>
            <person name="Nishiguchi S."/>
            <person name="Nishikawa S."/>
            <person name="Nori F."/>
            <person name="Ohara O."/>
            <person name="Okazaki Y."/>
            <person name="Orlando V."/>
            <person name="Pang K.C."/>
            <person name="Pavan W.J."/>
            <person name="Pavesi G."/>
            <person name="Pesole G."/>
            <person name="Petrovsky N."/>
            <person name="Piazza S."/>
            <person name="Reed J."/>
            <person name="Reid J.F."/>
            <person name="Ring B.Z."/>
            <person name="Ringwald M."/>
            <person name="Rost B."/>
            <person name="Ruan Y."/>
            <person name="Salzberg S.L."/>
            <person name="Sandelin A."/>
            <person name="Schneider C."/>
            <person name="Schoenbach C."/>
            <person name="Sekiguchi K."/>
            <person name="Semple C.A."/>
            <person name="Seno S."/>
            <person name="Sessa L."/>
            <person name="Sheng Y."/>
            <person name="Shibata Y."/>
            <person name="Shimada H."/>
            <person name="Shimada K."/>
            <person name="Silva D."/>
            <person name="Sinclair B."/>
            <person name="Sperling S."/>
            <person name="Stupka E."/>
            <person name="Sugiura K."/>
            <person name="Sultana R."/>
            <person name="Takenaka Y."/>
            <person name="Taki K."/>
            <person name="Tammoja K."/>
            <person name="Tan S.L."/>
            <person name="Tang S."/>
            <person name="Taylor M.S."/>
            <person name="Tegner J."/>
            <person name="Teichmann S.A."/>
            <person name="Ueda H.R."/>
            <person name="van Nimwegen E."/>
            <person name="Verardo R."/>
            <person name="Wei C.L."/>
            <person name="Yagi K."/>
            <person name="Yamanishi H."/>
            <person name="Zabarovsky E."/>
            <person name="Zhu S."/>
            <person name="Zimmer A."/>
            <person name="Hide W."/>
            <person name="Bult C."/>
            <person name="Grimmond S.M."/>
            <person name="Teasdale R.D."/>
            <person name="Liu E.T."/>
            <person name="Brusic V."/>
            <person name="Quackenbush J."/>
            <person name="Wahlestedt C."/>
            <person name="Mattick J.S."/>
            <person name="Hume D.A."/>
            <person name="Kai C."/>
            <person name="Sasaki D."/>
            <person name="Tomaru Y."/>
            <person name="Fukuda S."/>
            <person name="Kanamori-Katayama M."/>
            <person name="Suzuki M."/>
            <person name="Aoki J."/>
            <person name="Arakawa T."/>
            <person name="Iida J."/>
            <person name="Imamura K."/>
            <person name="Itoh M."/>
            <person name="Kato T."/>
            <person name="Kawaji H."/>
            <person name="Kawagashira N."/>
            <person name="Kawashima T."/>
            <person name="Kojima M."/>
            <person name="Kondo S."/>
            <person name="Konno H."/>
            <person name="Nakano K."/>
            <person name="Ninomiya N."/>
            <person name="Nishio T."/>
            <person name="Okada M."/>
            <person name="Plessy C."/>
            <person name="Shibata K."/>
            <person name="Shiraki T."/>
            <person name="Suzuki S."/>
            <person name="Tagami M."/>
            <person name="Waki K."/>
            <person name="Watahiki A."/>
            <person name="Okamura-Oho Y."/>
            <person name="Suzuki H."/>
            <person name="Kawai J."/>
            <person name="Hayashizaki Y."/>
        </authorList>
    </citation>
    <scope>NUCLEOTIDE SEQUENCE [LARGE SCALE MRNA]</scope>
    <source>
        <strain>C57BL/6J</strain>
        <tissue>Liver</tissue>
        <tissue>Tongue</tissue>
    </source>
</reference>
<reference key="3">
    <citation type="journal article" date="2004" name="Genome Res.">
        <title>The status, quality, and expansion of the NIH full-length cDNA project: the Mammalian Gene Collection (MGC).</title>
        <authorList>
            <consortium name="The MGC Project Team"/>
        </authorList>
    </citation>
    <scope>NUCLEOTIDE SEQUENCE [LARGE SCALE MRNA]</scope>
    <source>
        <strain>C57BL/6J</strain>
        <tissue>Embryo</tissue>
        <tissue>Kidney</tissue>
    </source>
</reference>
<reference key="4">
    <citation type="submission" date="2007-04" db="UniProtKB">
        <authorList>
            <person name="Lubec G."/>
            <person name="Klug S."/>
            <person name="Kang S.U."/>
            <person name="Yang J.W."/>
            <person name="Zigmond M."/>
        </authorList>
    </citation>
    <scope>PROTEIN SEQUENCE OF 11-39; 47-61; 91-100; 118-138; 163-176; 181-191; 223-240 AND 242-251</scope>
    <scope>IDENTIFICATION BY MASS SPECTROMETRY</scope>
    <source>
        <strain>C57BL/6J</strain>
        <tissue>Brain</tissue>
        <tissue>Hippocampus</tissue>
    </source>
</reference>
<reference key="5">
    <citation type="journal article" date="2007" name="J. Immunol.">
        <title>Quantitative time-resolved phosphoproteomic analysis of mast cell signaling.</title>
        <authorList>
            <person name="Cao L."/>
            <person name="Yu K."/>
            <person name="Banh C."/>
            <person name="Nguyen V."/>
            <person name="Ritz A."/>
            <person name="Raphael B.J."/>
            <person name="Kawakami Y."/>
            <person name="Kawakami T."/>
            <person name="Salomon A.R."/>
        </authorList>
    </citation>
    <scope>PHOSPHORYLATION [LARGE SCALE ANALYSIS] AT TYR-26</scope>
    <scope>IDENTIFICATION BY MASS SPECTROMETRY [LARGE SCALE ANALYSIS]</scope>
    <source>
        <tissue>Mast cell</tissue>
    </source>
</reference>
<reference key="6">
    <citation type="journal article" date="2007" name="Proc. Natl. Acad. Sci. U.S.A.">
        <title>Large-scale phosphorylation analysis of mouse liver.</title>
        <authorList>
            <person name="Villen J."/>
            <person name="Beausoleil S.A."/>
            <person name="Gerber S.A."/>
            <person name="Gygi S.P."/>
        </authorList>
    </citation>
    <scope>IDENTIFICATION BY MASS SPECTROMETRY [LARGE SCALE ANALYSIS]</scope>
    <source>
        <tissue>Liver</tissue>
    </source>
</reference>
<reference key="7">
    <citation type="journal article" date="2008" name="J. Proteome Res.">
        <title>Large-scale identification and evolution indexing of tyrosine phosphorylation sites from murine brain.</title>
        <authorList>
            <person name="Ballif B.A."/>
            <person name="Carey G.R."/>
            <person name="Sunyaev S.R."/>
            <person name="Gygi S.P."/>
        </authorList>
    </citation>
    <scope>PHOSPHORYLATION [LARGE SCALE ANALYSIS] AT TYR-26</scope>
    <scope>IDENTIFICATION BY MASS SPECTROMETRY [LARGE SCALE ANALYSIS]</scope>
    <source>
        <tissue>Brain</tissue>
    </source>
</reference>
<reference key="8">
    <citation type="journal article" date="2010" name="Cell">
        <title>A tissue-specific atlas of mouse protein phosphorylation and expression.</title>
        <authorList>
            <person name="Huttlin E.L."/>
            <person name="Jedrychowski M.P."/>
            <person name="Elias J.E."/>
            <person name="Goswami T."/>
            <person name="Rad R."/>
            <person name="Beausoleil S.A."/>
            <person name="Villen J."/>
            <person name="Haas W."/>
            <person name="Sowa M.E."/>
            <person name="Gygi S.P."/>
        </authorList>
    </citation>
    <scope>PHOSPHORYLATION [LARGE SCALE ANALYSIS] AT SER-14 AND SER-118</scope>
    <scope>IDENTIFICATION BY MASS SPECTROMETRY [LARGE SCALE ANALYSIS]</scope>
    <source>
        <tissue>Brain</tissue>
        <tissue>Brown adipose tissue</tissue>
        <tissue>Heart</tissue>
        <tissue>Kidney</tissue>
        <tissue>Liver</tissue>
        <tissue>Lung</tissue>
        <tissue>Pancreas</tissue>
        <tissue>Spleen</tissue>
        <tissue>Testis</tissue>
    </source>
</reference>
<reference key="9">
    <citation type="journal article" date="2013" name="Mol. Cell">
        <title>SIRT5-mediated lysine desuccinylation impacts diverse metabolic pathways.</title>
        <authorList>
            <person name="Park J."/>
            <person name="Chen Y."/>
            <person name="Tishkoff D.X."/>
            <person name="Peng C."/>
            <person name="Tan M."/>
            <person name="Dai L."/>
            <person name="Xie Z."/>
            <person name="Zhang Y."/>
            <person name="Zwaans B.M."/>
            <person name="Skinner M.E."/>
            <person name="Lombard D.B."/>
            <person name="Zhao Y."/>
        </authorList>
    </citation>
    <scope>ACETYLATION [LARGE SCALE ANALYSIS] AT LYS-106</scope>
    <scope>SUCCINYLATION [LARGE SCALE ANALYSIS] AT LYS-251</scope>
    <scope>IDENTIFICATION BY MASS SPECTROMETRY [LARGE SCALE ANALYSIS]</scope>
    <source>
        <tissue>Embryonic fibroblast</tissue>
        <tissue>Liver</tissue>
    </source>
</reference>
<comment type="function">
    <text evidence="3">Catalyzes the interconversion of 2-phosphoglycerate and 3-phosphoglyceratea crucial step in glycolysis, by using 2,3-bisphosphoglycerate. Also catalyzes the interconversion of (2R)-2,3-bisphosphoglycerate and (2R)-3-phospho-glyceroyl phosphate.</text>
</comment>
<comment type="catalytic activity">
    <reaction evidence="3">
        <text>(2R)-2-phosphoglycerate = (2R)-3-phosphoglycerate</text>
        <dbReference type="Rhea" id="RHEA:15901"/>
        <dbReference type="ChEBI" id="CHEBI:58272"/>
        <dbReference type="ChEBI" id="CHEBI:58289"/>
        <dbReference type="EC" id="5.4.2.11"/>
    </reaction>
    <physiologicalReaction direction="right-to-left" evidence="3">
        <dbReference type="Rhea" id="RHEA:15903"/>
    </physiologicalReaction>
</comment>
<comment type="catalytic activity">
    <reaction evidence="3">
        <text>(2R)-3-phospho-glyceroyl phosphate = (2R)-2,3-bisphosphoglycerate + H(+)</text>
        <dbReference type="Rhea" id="RHEA:17765"/>
        <dbReference type="ChEBI" id="CHEBI:15378"/>
        <dbReference type="ChEBI" id="CHEBI:57604"/>
        <dbReference type="ChEBI" id="CHEBI:58248"/>
        <dbReference type="EC" id="5.4.2.4"/>
    </reaction>
</comment>
<comment type="subunit">
    <text evidence="3">Homodimer.</text>
</comment>
<comment type="PTM">
    <text evidence="1">Acetylated at Lys-253, Lys-253 and Lys-254 under high glucose condition. Acetylation increases catalytic activity. Under glucose restriction SIRT1 levels dramatically increase and it deacetylates the enzyme (By similarity).</text>
</comment>
<comment type="similarity">
    <text evidence="4">Belongs to the phosphoglycerate mutase family. BPG-dependent PGAM subfamily.</text>
</comment>
<sequence>MAAYKLVLIRHGESAWNLENRFSGWYDADLSPAGHEEAKRGGQALRDAGYEFDICFTSVQKRAIRTLWTVLDAIDQMWLPVVRTWRLNERHYGGLTGLNKAETAAKHGEAQVKIWRRSYDVPPPPMEPDHPFYSNISKDRRYADLTEDQLPSCESLKDTIARALPFWNEEIVPQIKEGKRVLIAAHGNSLRGIVKHLEGLSEEAIMELNLPTGIPIVYELDKNLKPIKPMQFLGDEETVRKAMEAVAAQGKVKK</sequence>
<feature type="chain" id="PRO_0000179826" description="Phosphoglycerate mutase 1">
    <location>
        <begin position="1"/>
        <end position="254"/>
    </location>
</feature>
<feature type="active site" description="Tele-phosphohistidine intermediate" evidence="3">
    <location>
        <position position="11"/>
    </location>
</feature>
<feature type="active site" description="Proton donor/acceptor" evidence="3">
    <location>
        <position position="89"/>
    </location>
</feature>
<feature type="binding site" evidence="2">
    <location>
        <begin position="10"/>
        <end position="17"/>
    </location>
    <ligand>
        <name>substrate</name>
    </ligand>
</feature>
<feature type="binding site" evidence="2">
    <location>
        <begin position="23"/>
        <end position="24"/>
    </location>
    <ligand>
        <name>substrate</name>
    </ligand>
</feature>
<feature type="binding site" evidence="2">
    <location>
        <position position="62"/>
    </location>
    <ligand>
        <name>substrate</name>
    </ligand>
</feature>
<feature type="binding site" evidence="2">
    <location>
        <begin position="89"/>
        <end position="92"/>
    </location>
    <ligand>
        <name>substrate</name>
    </ligand>
</feature>
<feature type="binding site" evidence="2">
    <location>
        <position position="100"/>
    </location>
    <ligand>
        <name>substrate</name>
    </ligand>
</feature>
<feature type="binding site" evidence="2">
    <location>
        <begin position="116"/>
        <end position="117"/>
    </location>
    <ligand>
        <name>substrate</name>
    </ligand>
</feature>
<feature type="binding site" evidence="2">
    <location>
        <begin position="187"/>
        <end position="188"/>
    </location>
    <ligand>
        <name>substrate</name>
    </ligand>
</feature>
<feature type="site" description="Transition state stabilizer" evidence="2">
    <location>
        <position position="186"/>
    </location>
</feature>
<feature type="modified residue" description="Phosphoserine" evidence="8">
    <location>
        <position position="14"/>
    </location>
</feature>
<feature type="modified residue" description="Phosphoserine" evidence="3">
    <location>
        <position position="23"/>
    </location>
</feature>
<feature type="modified residue" description="Phosphotyrosine" evidence="6 7">
    <location>
        <position position="26"/>
    </location>
</feature>
<feature type="modified residue" description="Phosphoserine" evidence="3">
    <location>
        <position position="31"/>
    </location>
</feature>
<feature type="modified residue" description="N6-acetyllysine" evidence="9">
    <location>
        <position position="106"/>
    </location>
</feature>
<feature type="modified residue" description="Phosphoserine" evidence="8">
    <location>
        <position position="118"/>
    </location>
</feature>
<feature type="modified residue" description="N6-acetyllysine; alternate" evidence="3">
    <location>
        <position position="251"/>
    </location>
</feature>
<feature type="modified residue" description="N6-succinyllysine; alternate" evidence="9">
    <location>
        <position position="251"/>
    </location>
</feature>
<feature type="modified residue" description="N6-acetyllysine" evidence="3">
    <location>
        <position position="253"/>
    </location>
</feature>
<feature type="modified residue" description="N6-acetyllysine" evidence="3">
    <location>
        <position position="254"/>
    </location>
</feature>
<feature type="sequence conflict" description="In Ref. 1; AAG13955." evidence="4" ref="1">
    <original>G</original>
    <variation>R</variation>
    <location>
        <position position="42"/>
    </location>
</feature>
<feature type="sequence conflict" description="In Ref. 1; AAG13955." evidence="4" ref="1">
    <original>R</original>
    <variation>Q</variation>
    <location>
        <position position="65"/>
    </location>
</feature>
<feature type="sequence conflict" description="In Ref. 2; BAB26576." evidence="4" ref="2">
    <original>W</original>
    <variation>G</variation>
    <location>
        <position position="85"/>
    </location>
</feature>
<feature type="sequence conflict" description="In Ref. 1; AAG13955." evidence="4" ref="1">
    <original>S</original>
    <variation>F</variation>
    <location>
        <position position="152"/>
    </location>
</feature>
<feature type="sequence conflict" description="In Ref. 1; AAG13955." evidence="4" ref="1">
    <original>K</original>
    <variation>I</variation>
    <location>
        <position position="176"/>
    </location>
</feature>
<feature type="sequence conflict" description="In Ref. 1; AAG13955." evidence="4" ref="1">
    <original>KHL</original>
    <variation>MHV</variation>
    <location>
        <begin position="195"/>
        <end position="197"/>
    </location>
</feature>
<gene>
    <name evidence="5" type="primary">Pgam1</name>
</gene>
<keyword id="KW-0007">Acetylation</keyword>
<keyword id="KW-0903">Direct protein sequencing</keyword>
<keyword id="KW-0324">Glycolysis</keyword>
<keyword id="KW-0378">Hydrolase</keyword>
<keyword id="KW-0413">Isomerase</keyword>
<keyword id="KW-0597">Phosphoprotein</keyword>
<keyword id="KW-1185">Reference proteome</keyword>